<comment type="function">
    <text evidence="1">NDH-1 shuttles electrons from NADH, via FMN and iron-sulfur (Fe-S) centers, to quinones in the respiratory chain. The immediate electron acceptor for the enzyme in this species is believed to be ubiquinone. Couples the redox reaction to proton translocation (for every two electrons transferred, four hydrogen ions are translocated across the cytoplasmic membrane), and thus conserves the redox energy in a proton gradient.</text>
</comment>
<comment type="catalytic activity">
    <reaction evidence="1">
        <text>a quinone + NADH + 5 H(+)(in) = a quinol + NAD(+) + 4 H(+)(out)</text>
        <dbReference type="Rhea" id="RHEA:57888"/>
        <dbReference type="ChEBI" id="CHEBI:15378"/>
        <dbReference type="ChEBI" id="CHEBI:24646"/>
        <dbReference type="ChEBI" id="CHEBI:57540"/>
        <dbReference type="ChEBI" id="CHEBI:57945"/>
        <dbReference type="ChEBI" id="CHEBI:132124"/>
    </reaction>
</comment>
<comment type="cofactor">
    <cofactor evidence="1">
        <name>[4Fe-4S] cluster</name>
        <dbReference type="ChEBI" id="CHEBI:49883"/>
    </cofactor>
    <text evidence="1">Binds 1 [4Fe-4S] cluster.</text>
</comment>
<comment type="subunit">
    <text evidence="1">NDH-1 is composed of 14 different subunits. Subunits NuoB, C, D, E, F, and G constitute the peripheral sector of the complex.</text>
</comment>
<comment type="subcellular location">
    <subcellularLocation>
        <location evidence="1">Cell inner membrane</location>
        <topology evidence="1">Peripheral membrane protein</topology>
        <orientation evidence="1">Cytoplasmic side</orientation>
    </subcellularLocation>
</comment>
<comment type="similarity">
    <text evidence="1">Belongs to the complex I 20 kDa subunit family.</text>
</comment>
<dbReference type="EC" id="7.1.1.-" evidence="1"/>
<dbReference type="EMBL" id="CP000283">
    <property type="protein sequence ID" value="ABE38565.1"/>
    <property type="molecule type" value="Genomic_DNA"/>
</dbReference>
<dbReference type="SMR" id="Q13BH4"/>
<dbReference type="STRING" id="316057.RPD_1327"/>
<dbReference type="KEGG" id="rpd:RPD_1327"/>
<dbReference type="eggNOG" id="COG0377">
    <property type="taxonomic scope" value="Bacteria"/>
</dbReference>
<dbReference type="HOGENOM" id="CLU_055737_7_3_5"/>
<dbReference type="BioCyc" id="RPAL316057:RPD_RS06720-MONOMER"/>
<dbReference type="Proteomes" id="UP000001818">
    <property type="component" value="Chromosome"/>
</dbReference>
<dbReference type="GO" id="GO:0005886">
    <property type="term" value="C:plasma membrane"/>
    <property type="evidence" value="ECO:0007669"/>
    <property type="project" value="UniProtKB-SubCell"/>
</dbReference>
<dbReference type="GO" id="GO:0045271">
    <property type="term" value="C:respiratory chain complex I"/>
    <property type="evidence" value="ECO:0007669"/>
    <property type="project" value="TreeGrafter"/>
</dbReference>
<dbReference type="GO" id="GO:0051539">
    <property type="term" value="F:4 iron, 4 sulfur cluster binding"/>
    <property type="evidence" value="ECO:0007669"/>
    <property type="project" value="UniProtKB-KW"/>
</dbReference>
<dbReference type="GO" id="GO:0005506">
    <property type="term" value="F:iron ion binding"/>
    <property type="evidence" value="ECO:0007669"/>
    <property type="project" value="UniProtKB-UniRule"/>
</dbReference>
<dbReference type="GO" id="GO:0008137">
    <property type="term" value="F:NADH dehydrogenase (ubiquinone) activity"/>
    <property type="evidence" value="ECO:0007669"/>
    <property type="project" value="InterPro"/>
</dbReference>
<dbReference type="GO" id="GO:0050136">
    <property type="term" value="F:NADH:ubiquinone reductase (non-electrogenic) activity"/>
    <property type="evidence" value="ECO:0007669"/>
    <property type="project" value="UniProtKB-UniRule"/>
</dbReference>
<dbReference type="GO" id="GO:0048038">
    <property type="term" value="F:quinone binding"/>
    <property type="evidence" value="ECO:0007669"/>
    <property type="project" value="UniProtKB-KW"/>
</dbReference>
<dbReference type="GO" id="GO:0009060">
    <property type="term" value="P:aerobic respiration"/>
    <property type="evidence" value="ECO:0007669"/>
    <property type="project" value="TreeGrafter"/>
</dbReference>
<dbReference type="GO" id="GO:0015990">
    <property type="term" value="P:electron transport coupled proton transport"/>
    <property type="evidence" value="ECO:0007669"/>
    <property type="project" value="TreeGrafter"/>
</dbReference>
<dbReference type="FunFam" id="3.40.50.12280:FF:000002">
    <property type="entry name" value="NADH-quinone oxidoreductase subunit B"/>
    <property type="match status" value="1"/>
</dbReference>
<dbReference type="Gene3D" id="3.40.50.12280">
    <property type="match status" value="1"/>
</dbReference>
<dbReference type="HAMAP" id="MF_01356">
    <property type="entry name" value="NDH1_NuoB"/>
    <property type="match status" value="1"/>
</dbReference>
<dbReference type="InterPro" id="IPR006137">
    <property type="entry name" value="NADH_UbQ_OxRdtase-like_20kDa"/>
</dbReference>
<dbReference type="InterPro" id="IPR006138">
    <property type="entry name" value="NADH_UQ_OxRdtase_20Kd_su"/>
</dbReference>
<dbReference type="NCBIfam" id="TIGR01957">
    <property type="entry name" value="nuoB_fam"/>
    <property type="match status" value="1"/>
</dbReference>
<dbReference type="NCBIfam" id="NF005012">
    <property type="entry name" value="PRK06411.1"/>
    <property type="match status" value="1"/>
</dbReference>
<dbReference type="PANTHER" id="PTHR11995">
    <property type="entry name" value="NADH DEHYDROGENASE"/>
    <property type="match status" value="1"/>
</dbReference>
<dbReference type="PANTHER" id="PTHR11995:SF14">
    <property type="entry name" value="NADH DEHYDROGENASE [UBIQUINONE] IRON-SULFUR PROTEIN 7, MITOCHONDRIAL"/>
    <property type="match status" value="1"/>
</dbReference>
<dbReference type="Pfam" id="PF01058">
    <property type="entry name" value="Oxidored_q6"/>
    <property type="match status" value="1"/>
</dbReference>
<dbReference type="SUPFAM" id="SSF56770">
    <property type="entry name" value="HydA/Nqo6-like"/>
    <property type="match status" value="1"/>
</dbReference>
<dbReference type="PROSITE" id="PS01150">
    <property type="entry name" value="COMPLEX1_20K"/>
    <property type="match status" value="1"/>
</dbReference>
<sequence>MTLPPAIPPTPADSMSVEEHMARSNLFTTLEDLTAWSRKHSLWPFNFGLSCCYVEQVTVLTPVYDQARFGAEVIRASPRQADLLVVSGTVFHKMAAPLLRLYEQMRAPRWVISMGACANSGGMYDIYSVVQGVDRFIPVDVYIPGCPPRPEAMLDALIMLQQQIGSERRPLGVTVGNTAGLGFDAPRRRDQRRDERMAQTLLDPPEKL</sequence>
<organism>
    <name type="scientific">Rhodopseudomonas palustris (strain BisB5)</name>
    <dbReference type="NCBI Taxonomy" id="316057"/>
    <lineage>
        <taxon>Bacteria</taxon>
        <taxon>Pseudomonadati</taxon>
        <taxon>Pseudomonadota</taxon>
        <taxon>Alphaproteobacteria</taxon>
        <taxon>Hyphomicrobiales</taxon>
        <taxon>Nitrobacteraceae</taxon>
        <taxon>Rhodopseudomonas</taxon>
    </lineage>
</organism>
<reference key="1">
    <citation type="submission" date="2006-03" db="EMBL/GenBank/DDBJ databases">
        <title>Complete sequence of Rhodopseudomonas palustris BisB5.</title>
        <authorList>
            <consortium name="US DOE Joint Genome Institute"/>
            <person name="Copeland A."/>
            <person name="Lucas S."/>
            <person name="Lapidus A."/>
            <person name="Barry K."/>
            <person name="Detter J.C."/>
            <person name="Glavina del Rio T."/>
            <person name="Hammon N."/>
            <person name="Israni S."/>
            <person name="Dalin E."/>
            <person name="Tice H."/>
            <person name="Pitluck S."/>
            <person name="Chain P."/>
            <person name="Malfatti S."/>
            <person name="Shin M."/>
            <person name="Vergez L."/>
            <person name="Schmutz J."/>
            <person name="Larimer F."/>
            <person name="Land M."/>
            <person name="Hauser L."/>
            <person name="Pelletier D.A."/>
            <person name="Kyrpides N."/>
            <person name="Lykidis A."/>
            <person name="Oda Y."/>
            <person name="Harwood C.S."/>
            <person name="Richardson P."/>
        </authorList>
    </citation>
    <scope>NUCLEOTIDE SEQUENCE [LARGE SCALE GENOMIC DNA]</scope>
    <source>
        <strain>BisB5</strain>
    </source>
</reference>
<feature type="chain" id="PRO_0000376342" description="NADH-quinone oxidoreductase subunit B 1">
    <location>
        <begin position="1"/>
        <end position="208"/>
    </location>
</feature>
<feature type="region of interest" description="Disordered" evidence="2">
    <location>
        <begin position="182"/>
        <end position="208"/>
    </location>
</feature>
<feature type="compositionally biased region" description="Basic and acidic residues" evidence="2">
    <location>
        <begin position="185"/>
        <end position="197"/>
    </location>
</feature>
<feature type="binding site" evidence="1">
    <location>
        <position position="51"/>
    </location>
    <ligand>
        <name>[4Fe-4S] cluster</name>
        <dbReference type="ChEBI" id="CHEBI:49883"/>
    </ligand>
</feature>
<feature type="binding site" evidence="1">
    <location>
        <position position="52"/>
    </location>
    <ligand>
        <name>[4Fe-4S] cluster</name>
        <dbReference type="ChEBI" id="CHEBI:49883"/>
    </ligand>
</feature>
<feature type="binding site" evidence="1">
    <location>
        <position position="117"/>
    </location>
    <ligand>
        <name>[4Fe-4S] cluster</name>
        <dbReference type="ChEBI" id="CHEBI:49883"/>
    </ligand>
</feature>
<feature type="binding site" evidence="1">
    <location>
        <position position="146"/>
    </location>
    <ligand>
        <name>[4Fe-4S] cluster</name>
        <dbReference type="ChEBI" id="CHEBI:49883"/>
    </ligand>
</feature>
<accession>Q13BH4</accession>
<evidence type="ECO:0000255" key="1">
    <source>
        <dbReference type="HAMAP-Rule" id="MF_01356"/>
    </source>
</evidence>
<evidence type="ECO:0000256" key="2">
    <source>
        <dbReference type="SAM" id="MobiDB-lite"/>
    </source>
</evidence>
<name>NUOB1_RHOPS</name>
<keyword id="KW-0004">4Fe-4S</keyword>
<keyword id="KW-0997">Cell inner membrane</keyword>
<keyword id="KW-1003">Cell membrane</keyword>
<keyword id="KW-0408">Iron</keyword>
<keyword id="KW-0411">Iron-sulfur</keyword>
<keyword id="KW-0472">Membrane</keyword>
<keyword id="KW-0479">Metal-binding</keyword>
<keyword id="KW-0520">NAD</keyword>
<keyword id="KW-0874">Quinone</keyword>
<keyword id="KW-1278">Translocase</keyword>
<keyword id="KW-0813">Transport</keyword>
<keyword id="KW-0830">Ubiquinone</keyword>
<gene>
    <name evidence="1" type="primary">nuoB1</name>
    <name type="ordered locus">RPD_1327</name>
</gene>
<protein>
    <recommendedName>
        <fullName evidence="1">NADH-quinone oxidoreductase subunit B 1</fullName>
        <ecNumber evidence="1">7.1.1.-</ecNumber>
    </recommendedName>
    <alternativeName>
        <fullName evidence="1">NADH dehydrogenase I subunit B 1</fullName>
    </alternativeName>
    <alternativeName>
        <fullName evidence="1">NDH-1 subunit B 1</fullName>
    </alternativeName>
</protein>
<proteinExistence type="inferred from homology"/>